<name>DKGA_YERPE</name>
<reference key="1">
    <citation type="journal article" date="2001" name="Nature">
        <title>Genome sequence of Yersinia pestis, the causative agent of plague.</title>
        <authorList>
            <person name="Parkhill J."/>
            <person name="Wren B.W."/>
            <person name="Thomson N.R."/>
            <person name="Titball R.W."/>
            <person name="Holden M.T.G."/>
            <person name="Prentice M.B."/>
            <person name="Sebaihia M."/>
            <person name="James K.D."/>
            <person name="Churcher C.M."/>
            <person name="Mungall K.L."/>
            <person name="Baker S."/>
            <person name="Basham D."/>
            <person name="Bentley S.D."/>
            <person name="Brooks K."/>
            <person name="Cerdeno-Tarraga A.-M."/>
            <person name="Chillingworth T."/>
            <person name="Cronin A."/>
            <person name="Davies R.M."/>
            <person name="Davis P."/>
            <person name="Dougan G."/>
            <person name="Feltwell T."/>
            <person name="Hamlin N."/>
            <person name="Holroyd S."/>
            <person name="Jagels K."/>
            <person name="Karlyshev A.V."/>
            <person name="Leather S."/>
            <person name="Moule S."/>
            <person name="Oyston P.C.F."/>
            <person name="Quail M.A."/>
            <person name="Rutherford K.M."/>
            <person name="Simmonds M."/>
            <person name="Skelton J."/>
            <person name="Stevens K."/>
            <person name="Whitehead S."/>
            <person name="Barrell B.G."/>
        </authorList>
    </citation>
    <scope>NUCLEOTIDE SEQUENCE [LARGE SCALE GENOMIC DNA]</scope>
    <source>
        <strain>CO-92 / Biovar Orientalis</strain>
    </source>
</reference>
<reference key="2">
    <citation type="journal article" date="2002" name="J. Bacteriol.">
        <title>Genome sequence of Yersinia pestis KIM.</title>
        <authorList>
            <person name="Deng W."/>
            <person name="Burland V."/>
            <person name="Plunkett G. III"/>
            <person name="Boutin A."/>
            <person name="Mayhew G.F."/>
            <person name="Liss P."/>
            <person name="Perna N.T."/>
            <person name="Rose D.J."/>
            <person name="Mau B."/>
            <person name="Zhou S."/>
            <person name="Schwartz D.C."/>
            <person name="Fetherston J.D."/>
            <person name="Lindler L.E."/>
            <person name="Brubaker R.R."/>
            <person name="Plano G.V."/>
            <person name="Straley S.C."/>
            <person name="McDonough K.A."/>
            <person name="Nilles M.L."/>
            <person name="Matson J.S."/>
            <person name="Blattner F.R."/>
            <person name="Perry R.D."/>
        </authorList>
    </citation>
    <scope>NUCLEOTIDE SEQUENCE [LARGE SCALE GENOMIC DNA]</scope>
    <source>
        <strain>KIM10+ / Biovar Mediaevalis</strain>
    </source>
</reference>
<reference key="3">
    <citation type="journal article" date="2004" name="DNA Res.">
        <title>Complete genome sequence of Yersinia pestis strain 91001, an isolate avirulent to humans.</title>
        <authorList>
            <person name="Song Y."/>
            <person name="Tong Z."/>
            <person name="Wang J."/>
            <person name="Wang L."/>
            <person name="Guo Z."/>
            <person name="Han Y."/>
            <person name="Zhang J."/>
            <person name="Pei D."/>
            <person name="Zhou D."/>
            <person name="Qin H."/>
            <person name="Pang X."/>
            <person name="Han Y."/>
            <person name="Zhai J."/>
            <person name="Li M."/>
            <person name="Cui B."/>
            <person name="Qi Z."/>
            <person name="Jin L."/>
            <person name="Dai R."/>
            <person name="Chen F."/>
            <person name="Li S."/>
            <person name="Ye C."/>
            <person name="Du Z."/>
            <person name="Lin W."/>
            <person name="Wang J."/>
            <person name="Yu J."/>
            <person name="Yang H."/>
            <person name="Wang J."/>
            <person name="Huang P."/>
            <person name="Yang R."/>
        </authorList>
    </citation>
    <scope>NUCLEOTIDE SEQUENCE [LARGE SCALE GENOMIC DNA]</scope>
    <source>
        <strain>91001 / Biovar Mediaevalis</strain>
    </source>
</reference>
<proteinExistence type="inferred from homology"/>
<sequence length="277" mass="31520">MTMQPLIKLYDGRLMPQLGLGVWQASIQETELAVSKALEVGYRSIDTAAIYKNEEGVGKALKAAAVARDELFITTKLWNDDQHNPQQALETSLQKLQLDYVDLYLIHWPDPKQDHYVSAWRELVTLKEQGLIRSIGVCNFHIPHLQRLIDETGIAPTVNQIELHPLLQQRQLHAWNATHHIATESWSPLAQGGKGVFDQEIIRKLAQQYNKTPAQIVIRWHLDSGLIVIPKSVTPARIRENFEVFDFKLQKEELLAITKLDCGKRLGPDPEVFGSDR</sequence>
<gene>
    <name evidence="2" type="primary">dkgA</name>
    <name type="synonym">ara14</name>
    <name type="ordered locus">YPO0676</name>
    <name type="ordered locus">y3501</name>
    <name type="ordered locus">YP_2991</name>
</gene>
<comment type="function">
    <text evidence="2">Aldo-keto reductase that significantly contributes to cellular methylglyoxal detoxification by catalyzing the NADPH-dependent conversion of methylglyoxal to acetol.</text>
</comment>
<comment type="catalytic activity">
    <reaction evidence="2">
        <text>hydroxyacetone + NADP(+) = methylglyoxal + NADPH + H(+)</text>
        <dbReference type="Rhea" id="RHEA:27986"/>
        <dbReference type="ChEBI" id="CHEBI:15378"/>
        <dbReference type="ChEBI" id="CHEBI:17158"/>
        <dbReference type="ChEBI" id="CHEBI:27957"/>
        <dbReference type="ChEBI" id="CHEBI:57783"/>
        <dbReference type="ChEBI" id="CHEBI:58349"/>
    </reaction>
</comment>
<comment type="subunit">
    <text evidence="2">Monomer.</text>
</comment>
<comment type="subcellular location">
    <subcellularLocation>
        <location evidence="3">Cytoplasm</location>
    </subcellularLocation>
</comment>
<comment type="similarity">
    <text evidence="3">Belongs to the aldo/keto reductase family.</text>
</comment>
<evidence type="ECO:0000250" key="1"/>
<evidence type="ECO:0000250" key="2">
    <source>
        <dbReference type="UniProtKB" id="Q46857"/>
    </source>
</evidence>
<evidence type="ECO:0000305" key="3"/>
<keyword id="KW-0963">Cytoplasm</keyword>
<keyword id="KW-0521">NADP</keyword>
<keyword id="KW-0560">Oxidoreductase</keyword>
<keyword id="KW-1185">Reference proteome</keyword>
<feature type="chain" id="PRO_0000124603" description="Methylglyoxal reductase DkgA">
    <location>
        <begin position="1"/>
        <end position="277"/>
    </location>
</feature>
<feature type="active site" description="Proton donor" evidence="1">
    <location>
        <position position="51"/>
    </location>
</feature>
<feature type="binding site" evidence="1">
    <location>
        <position position="107"/>
    </location>
    <ligand>
        <name>substrate</name>
    </ligand>
</feature>
<feature type="binding site" evidence="1">
    <location>
        <begin position="187"/>
        <end position="241"/>
    </location>
    <ligand>
        <name>NADP(+)</name>
        <dbReference type="ChEBI" id="CHEBI:58349"/>
    </ligand>
</feature>
<accession>Q8ZI40</accession>
<accession>Q0WIZ6</accession>
<organism>
    <name type="scientific">Yersinia pestis</name>
    <dbReference type="NCBI Taxonomy" id="632"/>
    <lineage>
        <taxon>Bacteria</taxon>
        <taxon>Pseudomonadati</taxon>
        <taxon>Pseudomonadota</taxon>
        <taxon>Gammaproteobacteria</taxon>
        <taxon>Enterobacterales</taxon>
        <taxon>Yersiniaceae</taxon>
        <taxon>Yersinia</taxon>
    </lineage>
</organism>
<protein>
    <recommendedName>
        <fullName evidence="2">Methylglyoxal reductase DkgA</fullName>
        <ecNumber evidence="2">1.1.1.-</ecNumber>
    </recommendedName>
</protein>
<dbReference type="EC" id="1.1.1.-" evidence="2"/>
<dbReference type="EMBL" id="AL590842">
    <property type="protein sequence ID" value="CAL19352.1"/>
    <property type="molecule type" value="Genomic_DNA"/>
</dbReference>
<dbReference type="EMBL" id="AE009952">
    <property type="protein sequence ID" value="AAM87049.1"/>
    <property type="molecule type" value="Genomic_DNA"/>
</dbReference>
<dbReference type="EMBL" id="AE017042">
    <property type="protein sequence ID" value="AAS63169.1"/>
    <property type="molecule type" value="Genomic_DNA"/>
</dbReference>
<dbReference type="PIR" id="AF0083">
    <property type="entry name" value="AF0083"/>
</dbReference>
<dbReference type="RefSeq" id="WP_002212175.1">
    <property type="nucleotide sequence ID" value="NZ_WUCM01000053.1"/>
</dbReference>
<dbReference type="RefSeq" id="YP_002345742.1">
    <property type="nucleotide sequence ID" value="NC_003143.1"/>
</dbReference>
<dbReference type="SMR" id="Q8ZI40"/>
<dbReference type="STRING" id="214092.YPO0676"/>
<dbReference type="PaxDb" id="214092-YPO0676"/>
<dbReference type="DNASU" id="1148448"/>
<dbReference type="EnsemblBacteria" id="AAS63169">
    <property type="protein sequence ID" value="AAS63169"/>
    <property type="gene ID" value="YP_2991"/>
</dbReference>
<dbReference type="GeneID" id="57973951"/>
<dbReference type="KEGG" id="ype:YPO0676"/>
<dbReference type="KEGG" id="ypk:y3501"/>
<dbReference type="KEGG" id="ypm:YP_2991"/>
<dbReference type="PATRIC" id="fig|214092.21.peg.937"/>
<dbReference type="eggNOG" id="COG0656">
    <property type="taxonomic scope" value="Bacteria"/>
</dbReference>
<dbReference type="HOGENOM" id="CLU_023205_0_1_6"/>
<dbReference type="OMA" id="YCLQKNW"/>
<dbReference type="OrthoDB" id="9804790at2"/>
<dbReference type="Proteomes" id="UP000000815">
    <property type="component" value="Chromosome"/>
</dbReference>
<dbReference type="Proteomes" id="UP000001019">
    <property type="component" value="Chromosome"/>
</dbReference>
<dbReference type="Proteomes" id="UP000002490">
    <property type="component" value="Chromosome"/>
</dbReference>
<dbReference type="GO" id="GO:0005829">
    <property type="term" value="C:cytosol"/>
    <property type="evidence" value="ECO:0000318"/>
    <property type="project" value="GO_Central"/>
</dbReference>
<dbReference type="GO" id="GO:0004032">
    <property type="term" value="F:aldose reductase (NADPH) activity"/>
    <property type="evidence" value="ECO:0000318"/>
    <property type="project" value="GO_Central"/>
</dbReference>
<dbReference type="GO" id="GO:0019853">
    <property type="term" value="P:L-ascorbic acid biosynthetic process"/>
    <property type="evidence" value="ECO:0007669"/>
    <property type="project" value="UniProtKB-KW"/>
</dbReference>
<dbReference type="GO" id="GO:0051596">
    <property type="term" value="P:methylglyoxal catabolic process"/>
    <property type="evidence" value="ECO:0000318"/>
    <property type="project" value="GO_Central"/>
</dbReference>
<dbReference type="FunFam" id="3.20.20.100:FF:000002">
    <property type="entry name" value="2,5-diketo-D-gluconic acid reductase A"/>
    <property type="match status" value="1"/>
</dbReference>
<dbReference type="Gene3D" id="3.20.20.100">
    <property type="entry name" value="NADP-dependent oxidoreductase domain"/>
    <property type="match status" value="1"/>
</dbReference>
<dbReference type="InterPro" id="IPR020471">
    <property type="entry name" value="AKR"/>
</dbReference>
<dbReference type="InterPro" id="IPR018170">
    <property type="entry name" value="Aldo/ket_reductase_CS"/>
</dbReference>
<dbReference type="InterPro" id="IPR023210">
    <property type="entry name" value="NADP_OxRdtase_dom"/>
</dbReference>
<dbReference type="InterPro" id="IPR036812">
    <property type="entry name" value="NADP_OxRdtase_dom_sf"/>
</dbReference>
<dbReference type="NCBIfam" id="NF008598">
    <property type="entry name" value="PRK11565.1"/>
    <property type="match status" value="1"/>
</dbReference>
<dbReference type="PANTHER" id="PTHR43827">
    <property type="entry name" value="2,5-DIKETO-D-GLUCONIC ACID REDUCTASE"/>
    <property type="match status" value="1"/>
</dbReference>
<dbReference type="PANTHER" id="PTHR43827:SF3">
    <property type="entry name" value="NADP-DEPENDENT OXIDOREDUCTASE DOMAIN-CONTAINING PROTEIN"/>
    <property type="match status" value="1"/>
</dbReference>
<dbReference type="Pfam" id="PF00248">
    <property type="entry name" value="Aldo_ket_red"/>
    <property type="match status" value="1"/>
</dbReference>
<dbReference type="PIRSF" id="PIRSF000097">
    <property type="entry name" value="AKR"/>
    <property type="match status" value="1"/>
</dbReference>
<dbReference type="PRINTS" id="PR00069">
    <property type="entry name" value="ALDKETRDTASE"/>
</dbReference>
<dbReference type="SUPFAM" id="SSF51430">
    <property type="entry name" value="NAD(P)-linked oxidoreductase"/>
    <property type="match status" value="1"/>
</dbReference>
<dbReference type="PROSITE" id="PS00798">
    <property type="entry name" value="ALDOKETO_REDUCTASE_1"/>
    <property type="match status" value="1"/>
</dbReference>
<dbReference type="PROSITE" id="PS00062">
    <property type="entry name" value="ALDOKETO_REDUCTASE_2"/>
    <property type="match status" value="1"/>
</dbReference>
<dbReference type="PROSITE" id="PS00063">
    <property type="entry name" value="ALDOKETO_REDUCTASE_3"/>
    <property type="match status" value="1"/>
</dbReference>